<sequence>MKKVLALMVAATLGLSSVAFAADTTATATPAATSTTATVAAQTKATQHQKHKVTKKTTEQKAQAAKKHEKKASVQKTPVQKAQAAKKHVKKASVQKAPVQKAQAAKKHHKTAKKPVAAPAA</sequence>
<evidence type="ECO:0000255" key="1">
    <source>
        <dbReference type="HAMAP-Rule" id="MF_00546"/>
    </source>
</evidence>
<evidence type="ECO:0000256" key="2">
    <source>
        <dbReference type="SAM" id="MobiDB-lite"/>
    </source>
</evidence>
<reference key="1">
    <citation type="journal article" date="2010" name="J. Bacteriol.">
        <title>Genome sequence of the deep-rooted Yersinia pestis strain Angola reveals new insights into the evolution and pangenome of the plague bacterium.</title>
        <authorList>
            <person name="Eppinger M."/>
            <person name="Worsham P.L."/>
            <person name="Nikolich M.P."/>
            <person name="Riley D.R."/>
            <person name="Sebastian Y."/>
            <person name="Mou S."/>
            <person name="Achtman M."/>
            <person name="Lindler L.E."/>
            <person name="Ravel J."/>
        </authorList>
    </citation>
    <scope>NUCLEOTIDE SEQUENCE [LARGE SCALE GENOMIC DNA]</scope>
    <source>
        <strain>Angola</strain>
    </source>
</reference>
<accession>A9R3T6</accession>
<dbReference type="EMBL" id="CP000901">
    <property type="protein sequence ID" value="ABX87282.1"/>
    <property type="molecule type" value="Genomic_DNA"/>
</dbReference>
<dbReference type="RefSeq" id="WP_002212215.1">
    <property type="nucleotide sequence ID" value="NZ_CP009935.1"/>
</dbReference>
<dbReference type="GeneID" id="57976040"/>
<dbReference type="KEGG" id="ypg:YpAngola_A3541"/>
<dbReference type="PATRIC" id="fig|349746.12.peg.235"/>
<dbReference type="GO" id="GO:0042597">
    <property type="term" value="C:periplasmic space"/>
    <property type="evidence" value="ECO:0007669"/>
    <property type="project" value="UniProtKB-SubCell"/>
</dbReference>
<dbReference type="HAMAP" id="MF_00546">
    <property type="entry name" value="Asr"/>
    <property type="match status" value="1"/>
</dbReference>
<dbReference type="InterPro" id="IPR023497">
    <property type="entry name" value="Acid_shock"/>
</dbReference>
<dbReference type="NCBIfam" id="NF033636">
    <property type="entry name" value="acid_shock_Asr"/>
    <property type="match status" value="1"/>
</dbReference>
<dbReference type="Pfam" id="PF06392">
    <property type="entry name" value="Asr"/>
    <property type="match status" value="1"/>
</dbReference>
<keyword id="KW-0574">Periplasm</keyword>
<keyword id="KW-0732">Signal</keyword>
<name>ASR_YERPG</name>
<comment type="function">
    <text evidence="1">Required for growth and/or survival at acidic conditions.</text>
</comment>
<comment type="subcellular location">
    <subcellularLocation>
        <location evidence="1">Periplasm</location>
    </subcellularLocation>
</comment>
<comment type="PTM">
    <text evidence="1">Proteolytic processing gives rise to the active protein.</text>
</comment>
<comment type="similarity">
    <text evidence="1">Belongs to the Asr family.</text>
</comment>
<proteinExistence type="inferred from homology"/>
<gene>
    <name evidence="1" type="primary">asr</name>
    <name type="ordered locus">YpAngola_A3541</name>
</gene>
<feature type="signal peptide" evidence="1">
    <location>
        <begin position="1"/>
        <end position="21"/>
    </location>
</feature>
<feature type="propeptide" id="PRO_1000128937" evidence="1">
    <location>
        <begin position="22"/>
        <end position="63"/>
    </location>
</feature>
<feature type="chain" id="PRO_1000128938" description="Acid shock protein">
    <location>
        <begin position="64"/>
        <end position="121"/>
    </location>
</feature>
<feature type="region of interest" description="Disordered" evidence="2">
    <location>
        <begin position="40"/>
        <end position="121"/>
    </location>
</feature>
<feature type="compositionally biased region" description="Basic residues" evidence="2">
    <location>
        <begin position="84"/>
        <end position="93"/>
    </location>
</feature>
<feature type="compositionally biased region" description="Low complexity" evidence="2">
    <location>
        <begin position="94"/>
        <end position="103"/>
    </location>
</feature>
<feature type="compositionally biased region" description="Basic residues" evidence="2">
    <location>
        <begin position="104"/>
        <end position="113"/>
    </location>
</feature>
<protein>
    <recommendedName>
        <fullName evidence="1">Acid shock protein</fullName>
    </recommendedName>
</protein>
<organism>
    <name type="scientific">Yersinia pestis bv. Antiqua (strain Angola)</name>
    <dbReference type="NCBI Taxonomy" id="349746"/>
    <lineage>
        <taxon>Bacteria</taxon>
        <taxon>Pseudomonadati</taxon>
        <taxon>Pseudomonadota</taxon>
        <taxon>Gammaproteobacteria</taxon>
        <taxon>Enterobacterales</taxon>
        <taxon>Yersiniaceae</taxon>
        <taxon>Yersinia</taxon>
    </lineage>
</organism>